<proteinExistence type="inferred from homology"/>
<sequence>MSRVCQVTGKRPQVGNNVSHAHNKTRRRFLPNLHNHRFWVESENRFVRLRVSTKGMRIIDKHGIDKVLADLRAKGEKV</sequence>
<gene>
    <name evidence="1" type="primary">rpmB</name>
    <name type="ordered locus">PsycPRwf_0589</name>
</gene>
<evidence type="ECO:0000255" key="1">
    <source>
        <dbReference type="HAMAP-Rule" id="MF_00373"/>
    </source>
</evidence>
<evidence type="ECO:0000305" key="2"/>
<feature type="chain" id="PRO_1000072137" description="Large ribosomal subunit protein bL28">
    <location>
        <begin position="1"/>
        <end position="78"/>
    </location>
</feature>
<organism>
    <name type="scientific">Psychrobacter sp. (strain PRwf-1)</name>
    <dbReference type="NCBI Taxonomy" id="349106"/>
    <lineage>
        <taxon>Bacteria</taxon>
        <taxon>Pseudomonadati</taxon>
        <taxon>Pseudomonadota</taxon>
        <taxon>Gammaproteobacteria</taxon>
        <taxon>Moraxellales</taxon>
        <taxon>Moraxellaceae</taxon>
        <taxon>Psychrobacter</taxon>
    </lineage>
</organism>
<name>RL28_PSYWF</name>
<reference key="1">
    <citation type="submission" date="2007-05" db="EMBL/GenBank/DDBJ databases">
        <title>Complete sequence of chromosome of Psychrobacter sp. PRwf-1.</title>
        <authorList>
            <consortium name="US DOE Joint Genome Institute"/>
            <person name="Copeland A."/>
            <person name="Lucas S."/>
            <person name="Lapidus A."/>
            <person name="Barry K."/>
            <person name="Detter J.C."/>
            <person name="Glavina del Rio T."/>
            <person name="Hammon N."/>
            <person name="Israni S."/>
            <person name="Dalin E."/>
            <person name="Tice H."/>
            <person name="Pitluck S."/>
            <person name="Chain P."/>
            <person name="Malfatti S."/>
            <person name="Shin M."/>
            <person name="Vergez L."/>
            <person name="Schmutz J."/>
            <person name="Larimer F."/>
            <person name="Land M."/>
            <person name="Hauser L."/>
            <person name="Kyrpides N."/>
            <person name="Kim E."/>
            <person name="Tiedje J."/>
            <person name="Richardson P."/>
        </authorList>
    </citation>
    <scope>NUCLEOTIDE SEQUENCE [LARGE SCALE GENOMIC DNA]</scope>
    <source>
        <strain>PRwf-1</strain>
    </source>
</reference>
<dbReference type="EMBL" id="CP000713">
    <property type="protein sequence ID" value="ABQ93544.1"/>
    <property type="molecule type" value="Genomic_DNA"/>
</dbReference>
<dbReference type="SMR" id="A5WD03"/>
<dbReference type="STRING" id="349106.PsycPRwf_0589"/>
<dbReference type="KEGG" id="prw:PsycPRwf_0589"/>
<dbReference type="eggNOG" id="COG0227">
    <property type="taxonomic scope" value="Bacteria"/>
</dbReference>
<dbReference type="HOGENOM" id="CLU_064548_3_1_6"/>
<dbReference type="GO" id="GO:0022625">
    <property type="term" value="C:cytosolic large ribosomal subunit"/>
    <property type="evidence" value="ECO:0007669"/>
    <property type="project" value="TreeGrafter"/>
</dbReference>
<dbReference type="GO" id="GO:0003735">
    <property type="term" value="F:structural constituent of ribosome"/>
    <property type="evidence" value="ECO:0007669"/>
    <property type="project" value="InterPro"/>
</dbReference>
<dbReference type="GO" id="GO:0006412">
    <property type="term" value="P:translation"/>
    <property type="evidence" value="ECO:0007669"/>
    <property type="project" value="UniProtKB-UniRule"/>
</dbReference>
<dbReference type="FunFam" id="2.30.170.40:FF:000001">
    <property type="entry name" value="50S ribosomal protein L28"/>
    <property type="match status" value="1"/>
</dbReference>
<dbReference type="Gene3D" id="2.30.170.40">
    <property type="entry name" value="Ribosomal protein L28/L24"/>
    <property type="match status" value="1"/>
</dbReference>
<dbReference type="HAMAP" id="MF_00373">
    <property type="entry name" value="Ribosomal_bL28"/>
    <property type="match status" value="1"/>
</dbReference>
<dbReference type="InterPro" id="IPR026569">
    <property type="entry name" value="Ribosomal_bL28"/>
</dbReference>
<dbReference type="InterPro" id="IPR034704">
    <property type="entry name" value="Ribosomal_bL28/bL31-like_sf"/>
</dbReference>
<dbReference type="InterPro" id="IPR001383">
    <property type="entry name" value="Ribosomal_bL28_bact-type"/>
</dbReference>
<dbReference type="InterPro" id="IPR037147">
    <property type="entry name" value="Ribosomal_bL28_sf"/>
</dbReference>
<dbReference type="NCBIfam" id="TIGR00009">
    <property type="entry name" value="L28"/>
    <property type="match status" value="1"/>
</dbReference>
<dbReference type="PANTHER" id="PTHR13528">
    <property type="entry name" value="39S RIBOSOMAL PROTEIN L28, MITOCHONDRIAL"/>
    <property type="match status" value="1"/>
</dbReference>
<dbReference type="PANTHER" id="PTHR13528:SF2">
    <property type="entry name" value="LARGE RIBOSOMAL SUBUNIT PROTEIN BL28M"/>
    <property type="match status" value="1"/>
</dbReference>
<dbReference type="Pfam" id="PF00830">
    <property type="entry name" value="Ribosomal_L28"/>
    <property type="match status" value="1"/>
</dbReference>
<dbReference type="SUPFAM" id="SSF143800">
    <property type="entry name" value="L28p-like"/>
    <property type="match status" value="1"/>
</dbReference>
<accession>A5WD03</accession>
<protein>
    <recommendedName>
        <fullName evidence="1">Large ribosomal subunit protein bL28</fullName>
    </recommendedName>
    <alternativeName>
        <fullName evidence="2">50S ribosomal protein L28</fullName>
    </alternativeName>
</protein>
<comment type="similarity">
    <text evidence="1">Belongs to the bacterial ribosomal protein bL28 family.</text>
</comment>
<keyword id="KW-0687">Ribonucleoprotein</keyword>
<keyword id="KW-0689">Ribosomal protein</keyword>